<proteinExistence type="evidence at protein level"/>
<evidence type="ECO:0000250" key="1"/>
<evidence type="ECO:0000250" key="2">
    <source>
        <dbReference type="UniProtKB" id="Q92541"/>
    </source>
</evidence>
<evidence type="ECO:0000255" key="3"/>
<evidence type="ECO:0000255" key="4">
    <source>
        <dbReference type="PROSITE-ProRule" id="PRU00693"/>
    </source>
</evidence>
<evidence type="ECO:0000256" key="5">
    <source>
        <dbReference type="SAM" id="MobiDB-lite"/>
    </source>
</evidence>
<evidence type="ECO:0000269" key="6">
    <source>
    </source>
</evidence>
<evidence type="ECO:0000269" key="7">
    <source>
    </source>
</evidence>
<evidence type="ECO:0000305" key="8"/>
<keyword id="KW-0010">Activator</keyword>
<keyword id="KW-0175">Coiled coil</keyword>
<keyword id="KW-0238">DNA-binding</keyword>
<keyword id="KW-0539">Nucleus</keyword>
<keyword id="KW-0597">Phosphoprotein</keyword>
<keyword id="KW-1185">Reference proteome</keyword>
<keyword id="KW-0804">Transcription</keyword>
<keyword id="KW-0805">Transcription regulation</keyword>
<keyword id="KW-0879">Wnt signaling pathway</keyword>
<organism>
    <name type="scientific">Mus musculus</name>
    <name type="common">Mouse</name>
    <dbReference type="NCBI Taxonomy" id="10090"/>
    <lineage>
        <taxon>Eukaryota</taxon>
        <taxon>Metazoa</taxon>
        <taxon>Chordata</taxon>
        <taxon>Craniata</taxon>
        <taxon>Vertebrata</taxon>
        <taxon>Euteleostomi</taxon>
        <taxon>Mammalia</taxon>
        <taxon>Eutheria</taxon>
        <taxon>Euarchontoglires</taxon>
        <taxon>Glires</taxon>
        <taxon>Rodentia</taxon>
        <taxon>Myomorpha</taxon>
        <taxon>Muroidea</taxon>
        <taxon>Muridae</taxon>
        <taxon>Murinae</taxon>
        <taxon>Mus</taxon>
        <taxon>Mus</taxon>
    </lineage>
</organism>
<accession>A2AQ19</accession>
<accession>Q08EC5</accession>
<feature type="chain" id="PRO_0000401196" description="RNA polymerase-associated protein RTF1 homolog">
    <location>
        <begin position="1"/>
        <end position="715"/>
    </location>
</feature>
<feature type="domain" description="Plus3" evidence="4">
    <location>
        <begin position="358"/>
        <end position="489"/>
    </location>
</feature>
<feature type="region of interest" description="Disordered" evidence="5">
    <location>
        <begin position="28"/>
        <end position="218"/>
    </location>
</feature>
<feature type="region of interest" description="Disordered" evidence="5">
    <location>
        <begin position="233"/>
        <end position="362"/>
    </location>
</feature>
<feature type="region of interest" description="Disordered" evidence="5">
    <location>
        <begin position="632"/>
        <end position="654"/>
    </location>
</feature>
<feature type="region of interest" description="Disordered" evidence="5">
    <location>
        <begin position="679"/>
        <end position="715"/>
    </location>
</feature>
<feature type="coiled-coil region" evidence="3">
    <location>
        <begin position="531"/>
        <end position="565"/>
    </location>
</feature>
<feature type="compositionally biased region" description="Gly residues" evidence="5">
    <location>
        <begin position="29"/>
        <end position="38"/>
    </location>
</feature>
<feature type="compositionally biased region" description="Acidic residues" evidence="5">
    <location>
        <begin position="58"/>
        <end position="70"/>
    </location>
</feature>
<feature type="compositionally biased region" description="Basic residues" evidence="5">
    <location>
        <begin position="115"/>
        <end position="135"/>
    </location>
</feature>
<feature type="compositionally biased region" description="Low complexity" evidence="5">
    <location>
        <begin position="163"/>
        <end position="175"/>
    </location>
</feature>
<feature type="compositionally biased region" description="Basic and acidic residues" evidence="5">
    <location>
        <begin position="197"/>
        <end position="218"/>
    </location>
</feature>
<feature type="compositionally biased region" description="Basic residues" evidence="5">
    <location>
        <begin position="233"/>
        <end position="245"/>
    </location>
</feature>
<feature type="compositionally biased region" description="Basic and acidic residues" evidence="5">
    <location>
        <begin position="246"/>
        <end position="256"/>
    </location>
</feature>
<feature type="compositionally biased region" description="Basic and acidic residues" evidence="5">
    <location>
        <begin position="274"/>
        <end position="296"/>
    </location>
</feature>
<feature type="compositionally biased region" description="Acidic residues" evidence="5">
    <location>
        <begin position="317"/>
        <end position="328"/>
    </location>
</feature>
<feature type="compositionally biased region" description="Basic and acidic residues" evidence="5">
    <location>
        <begin position="637"/>
        <end position="652"/>
    </location>
</feature>
<feature type="compositionally biased region" description="Basic and acidic residues" evidence="5">
    <location>
        <begin position="697"/>
        <end position="709"/>
    </location>
</feature>
<feature type="modified residue" description="Phosphoserine" evidence="2">
    <location>
        <position position="58"/>
    </location>
</feature>
<feature type="modified residue" description="Phosphothreonine" evidence="2">
    <location>
        <position position="60"/>
    </location>
</feature>
<feature type="modified residue" description="Phosphoserine" evidence="2">
    <location>
        <position position="631"/>
    </location>
</feature>
<feature type="modified residue" description="Phosphoserine" evidence="2">
    <location>
        <position position="660"/>
    </location>
</feature>
<feature type="modified residue" description="Phosphoserine" evidence="2">
    <location>
        <position position="702"/>
    </location>
</feature>
<protein>
    <recommendedName>
        <fullName>RNA polymerase-associated protein RTF1 homolog</fullName>
    </recommendedName>
</protein>
<name>RTF1_MOUSE</name>
<gene>
    <name type="primary">Rtf1</name>
</gene>
<dbReference type="EMBL" id="AL844536">
    <property type="status" value="NOT_ANNOTATED_CDS"/>
    <property type="molecule type" value="Genomic_DNA"/>
</dbReference>
<dbReference type="EMBL" id="BC117848">
    <property type="protein sequence ID" value="AAI17849.1"/>
    <property type="status" value="ALT_INIT"/>
    <property type="molecule type" value="mRNA"/>
</dbReference>
<dbReference type="EMBL" id="BC117849">
    <property type="protein sequence ID" value="AAI17850.1"/>
    <property type="status" value="ALT_INIT"/>
    <property type="molecule type" value="mRNA"/>
</dbReference>
<dbReference type="CCDS" id="CCDS50673.1"/>
<dbReference type="RefSeq" id="NP_084388.2">
    <property type="nucleotide sequence ID" value="NM_030112.2"/>
</dbReference>
<dbReference type="BMRB" id="A2AQ19"/>
<dbReference type="SMR" id="A2AQ19"/>
<dbReference type="BioGRID" id="218047">
    <property type="interactions" value="14"/>
</dbReference>
<dbReference type="FunCoup" id="A2AQ19">
    <property type="interactions" value="3615"/>
</dbReference>
<dbReference type="IntAct" id="A2AQ19">
    <property type="interactions" value="1"/>
</dbReference>
<dbReference type="STRING" id="10090.ENSMUSP00000028767"/>
<dbReference type="GlyGen" id="A2AQ19">
    <property type="glycosylation" value="1 site, 1 O-linked glycan (1 site)"/>
</dbReference>
<dbReference type="iPTMnet" id="A2AQ19"/>
<dbReference type="PhosphoSitePlus" id="A2AQ19"/>
<dbReference type="PaxDb" id="10090-ENSMUSP00000028767"/>
<dbReference type="PeptideAtlas" id="A2AQ19"/>
<dbReference type="ProteomicsDB" id="256637"/>
<dbReference type="Pumba" id="A2AQ19"/>
<dbReference type="Antibodypedia" id="1858">
    <property type="antibodies" value="234 antibodies from 29 providers"/>
</dbReference>
<dbReference type="Ensembl" id="ENSMUST00000028767.9">
    <property type="protein sequence ID" value="ENSMUSP00000028767.9"/>
    <property type="gene ID" value="ENSMUSG00000027304.10"/>
</dbReference>
<dbReference type="GeneID" id="76246"/>
<dbReference type="KEGG" id="mmu:76246"/>
<dbReference type="UCSC" id="uc008lue.2">
    <property type="organism name" value="mouse"/>
</dbReference>
<dbReference type="AGR" id="MGI:1309480"/>
<dbReference type="CTD" id="23168"/>
<dbReference type="MGI" id="MGI:1309480">
    <property type="gene designation" value="Rtf1"/>
</dbReference>
<dbReference type="VEuPathDB" id="HostDB:ENSMUSG00000027304"/>
<dbReference type="eggNOG" id="KOG2402">
    <property type="taxonomic scope" value="Eukaryota"/>
</dbReference>
<dbReference type="GeneTree" id="ENSGT00390000012493"/>
<dbReference type="HOGENOM" id="CLU_018644_0_1_1"/>
<dbReference type="InParanoid" id="A2AQ19"/>
<dbReference type="OMA" id="ISGCYAR"/>
<dbReference type="OrthoDB" id="166375at2759"/>
<dbReference type="PhylomeDB" id="A2AQ19"/>
<dbReference type="TreeFam" id="TF321360"/>
<dbReference type="BioGRID-ORCS" id="76246">
    <property type="hits" value="23 hits in 80 CRISPR screens"/>
</dbReference>
<dbReference type="ChiTaRS" id="Rtf1">
    <property type="organism name" value="mouse"/>
</dbReference>
<dbReference type="PRO" id="PR:A2AQ19"/>
<dbReference type="Proteomes" id="UP000000589">
    <property type="component" value="Chromosome 2"/>
</dbReference>
<dbReference type="RNAct" id="A2AQ19">
    <property type="molecule type" value="protein"/>
</dbReference>
<dbReference type="Bgee" id="ENSMUSG00000027304">
    <property type="expression patterns" value="Expressed in embryonic brain and 234 other cell types or tissues"/>
</dbReference>
<dbReference type="GO" id="GO:0016593">
    <property type="term" value="C:Cdc73/Paf1 complex"/>
    <property type="evidence" value="ECO:0000353"/>
    <property type="project" value="UniProtKB"/>
</dbReference>
<dbReference type="GO" id="GO:0005730">
    <property type="term" value="C:nucleolus"/>
    <property type="evidence" value="ECO:0000314"/>
    <property type="project" value="MGI"/>
</dbReference>
<dbReference type="GO" id="GO:0003697">
    <property type="term" value="F:single-stranded DNA binding"/>
    <property type="evidence" value="ECO:0000250"/>
    <property type="project" value="UniProtKB"/>
</dbReference>
<dbReference type="GO" id="GO:0001832">
    <property type="term" value="P:blastocyst growth"/>
    <property type="evidence" value="ECO:0000315"/>
    <property type="project" value="MGI"/>
</dbReference>
<dbReference type="GO" id="GO:0006325">
    <property type="term" value="P:chromatin organization"/>
    <property type="evidence" value="ECO:0000315"/>
    <property type="project" value="UniProtKB"/>
</dbReference>
<dbReference type="GO" id="GO:0001711">
    <property type="term" value="P:endodermal cell fate commitment"/>
    <property type="evidence" value="ECO:0000315"/>
    <property type="project" value="UniProtKB"/>
</dbReference>
<dbReference type="GO" id="GO:0000122">
    <property type="term" value="P:negative regulation of transcription by RNA polymerase II"/>
    <property type="evidence" value="ECO:0000315"/>
    <property type="project" value="UniProtKB"/>
</dbReference>
<dbReference type="GO" id="GO:0019827">
    <property type="term" value="P:stem cell population maintenance"/>
    <property type="evidence" value="ECO:0000315"/>
    <property type="project" value="UniProtKB"/>
</dbReference>
<dbReference type="GO" id="GO:0006368">
    <property type="term" value="P:transcription elongation by RNA polymerase II"/>
    <property type="evidence" value="ECO:0000250"/>
    <property type="project" value="UniProtKB"/>
</dbReference>
<dbReference type="GO" id="GO:0016055">
    <property type="term" value="P:Wnt signaling pathway"/>
    <property type="evidence" value="ECO:0007669"/>
    <property type="project" value="UniProtKB-KW"/>
</dbReference>
<dbReference type="FunFam" id="3.90.70.200:FF:000001">
    <property type="entry name" value="RNA polymerase-associated protein RTF1 homolog"/>
    <property type="match status" value="1"/>
</dbReference>
<dbReference type="Gene3D" id="3.90.70.200">
    <property type="entry name" value="Plus-3 domain"/>
    <property type="match status" value="1"/>
</dbReference>
<dbReference type="InterPro" id="IPR004343">
    <property type="entry name" value="Plus-3_dom"/>
</dbReference>
<dbReference type="InterPro" id="IPR036128">
    <property type="entry name" value="Plus3-like_sf"/>
</dbReference>
<dbReference type="PANTHER" id="PTHR13115">
    <property type="entry name" value="RNA POLYMERASE-ASSOCIATED PROTEIN RTF1 HOMOLOG"/>
    <property type="match status" value="1"/>
</dbReference>
<dbReference type="PANTHER" id="PTHR13115:SF8">
    <property type="entry name" value="RNA POLYMERASE-ASSOCIATED PROTEIN RTF1 HOMOLOG"/>
    <property type="match status" value="1"/>
</dbReference>
<dbReference type="Pfam" id="PF03126">
    <property type="entry name" value="Plus-3"/>
    <property type="match status" value="1"/>
</dbReference>
<dbReference type="SMART" id="SM00719">
    <property type="entry name" value="Plus3"/>
    <property type="match status" value="1"/>
</dbReference>
<dbReference type="SUPFAM" id="SSF159042">
    <property type="entry name" value="Plus3-like"/>
    <property type="match status" value="1"/>
</dbReference>
<dbReference type="PROSITE" id="PS51360">
    <property type="entry name" value="PLUS3"/>
    <property type="match status" value="1"/>
</dbReference>
<comment type="function">
    <text evidence="1 6">Component of the PAF1 complex (PAF1C) which has multiple functions during transcription by RNA polymerase II and is implicated in regulation of development and maintenance of embryonic stem cell pluripotency. PAF1C associates with RNA polymerase II through interaction with POLR2A CTD non-phosphorylated and 'Ser-2'- and 'Ser-5'-phosphorylated forms and is involved in transcriptional elongation, acting both independently and synergistically with TCEA1 and in cooperation with the DSIF complex and HTATSF1. PAF1C is required for transcription of Hox and Wnt target genes. PAF1C is involved in hematopoiesis and stimulates transcriptional activity of KMT2A/MLL1. PAF1C is involved in histone modifications such as ubiquitination of histone H2B and methylation on histone H3 'Lys-4' (H3K4me3). PAF1C recruits the RNF20/40 E3 ubiquitin-protein ligase complex and the E2 enzyme UBE2A or UBE2B to chromatin which mediate monoubiquitination of 'Lys-120' of histone H2B (H2BK120ub1); UB2A/B-mediated H2B ubiquitination is proposed to be coupled to transcription. PAF1C is involved in mRNA 3' end formation probably through association with cleavage and poly(A) factors. Binds single-stranded DNA (By similarity). Required for maximal induction of heat-shock genes. Required for the trimethylation of histone H3 'Lys-4' (H3K4me3) on genes involved in stem cell pluripotency; this function is synergistic with CXXC1 indicative for an involvement of a SET1 complex.</text>
</comment>
<comment type="subunit">
    <text evidence="2 7">Component of the PAF1 complex, which consists of CDC73, PAF1, LEO1, CTR9, RTF1 and WDR61. The PAF1 complex interacts with PHF5A (PubMed:27749823).</text>
</comment>
<comment type="subcellular location">
    <subcellularLocation>
        <location evidence="1">Nucleus</location>
        <location evidence="1">Nucleoplasm</location>
    </subcellularLocation>
</comment>
<comment type="domain">
    <text evidence="1">The Plus3 domain mediates single-stranded DNA-binding.</text>
</comment>
<comment type="caution">
    <text evidence="8">It is uncertain whether Met-1 or Met-46 is the initiator.</text>
</comment>
<comment type="sequence caution" evidence="8">
    <conflict type="erroneous initiation">
        <sequence resource="EMBL-CDS" id="AAI17849"/>
    </conflict>
    <text>Truncated N-terminus.</text>
</comment>
<comment type="sequence caution" evidence="8">
    <conflict type="erroneous initiation">
        <sequence resource="EMBL-CDS" id="AAI17850"/>
    </conflict>
    <text>Truncated N-terminus.</text>
</comment>
<sequence>MRGRLCVGRAAAVAAAVAAAAVAVPLAGGQEGSQGGVRRGSRGTTMVKKRKGRVVIDSDTEDSGSDENLDQELLSLAKRKRSDSEEKEPPVSQPAASSDSETSDSDDEWTFGSNKNKKKGKTRKVEKKGAMKKQANKAASSGSSDRDSSAESSAPEEGEVSDSESSSSSSSSDSDSSSEDEEFHDGYGEDLMGDEEDRARLEQMTEKEREQELFNRIEKREVLKRRFEIKKKLKTAKKKEKKEKKKKQEEEQEKKKLTQIQESQVTSHNKERRSKRDEKLDKKSQAMEELKAEREKRKNRTAELLAKKQPLKTSEVYSDDEEEEDDDKSSEKSDRSSRTSSSDEEEEKEEIPPKSQPVSLPEELNRVRLSRHKLERWCHMPFFAKTVTGCFVRIGIGNHNSKPVYRVAEITGVVETAKVYQLGGTRTNKGLQLRHGNDQRVFRLEFVSNQEFTESEFMKWKEAMFSAGMQLPTLDEINKKELSIKEALNYKFNDQDIEEIVKEKERFRKAPPNYAMKKTQLLKEKAMAEDLGDQDKAKQIQDQLNELEERAEALDRQRTKNISAISYINQRNREWNIVESEKALVAESHNMRNQQMDPFTRRQCKPTIVSNSRDPAVQAAILAQLNAKYGSGVLPDAPKEMSKGQGKDKDLNSKTASDLSEDLFKVHDFDVKIDLQVPSSESKALAITSKAPPAKDGAPRRSLNLEDYKKRRGLI</sequence>
<reference key="1">
    <citation type="journal article" date="2009" name="PLoS Biol.">
        <title>Lineage-specific biology revealed by a finished genome assembly of the mouse.</title>
        <authorList>
            <person name="Church D.M."/>
            <person name="Goodstadt L."/>
            <person name="Hillier L.W."/>
            <person name="Zody M.C."/>
            <person name="Goldstein S."/>
            <person name="She X."/>
            <person name="Bult C.J."/>
            <person name="Agarwala R."/>
            <person name="Cherry J.L."/>
            <person name="DiCuccio M."/>
            <person name="Hlavina W."/>
            <person name="Kapustin Y."/>
            <person name="Meric P."/>
            <person name="Maglott D."/>
            <person name="Birtle Z."/>
            <person name="Marques A.C."/>
            <person name="Graves T."/>
            <person name="Zhou S."/>
            <person name="Teague B."/>
            <person name="Potamousis K."/>
            <person name="Churas C."/>
            <person name="Place M."/>
            <person name="Herschleb J."/>
            <person name="Runnheim R."/>
            <person name="Forrest D."/>
            <person name="Amos-Landgraf J."/>
            <person name="Schwartz D.C."/>
            <person name="Cheng Z."/>
            <person name="Lindblad-Toh K."/>
            <person name="Eichler E.E."/>
            <person name="Ponting C.P."/>
        </authorList>
    </citation>
    <scope>NUCLEOTIDE SEQUENCE [LARGE SCALE GENOMIC DNA]</scope>
    <source>
        <strain>C57BL/6J</strain>
    </source>
</reference>
<reference key="2">
    <citation type="journal article" date="2004" name="Genome Res.">
        <title>The status, quality, and expansion of the NIH full-length cDNA project: the Mammalian Gene Collection (MGC).</title>
        <authorList>
            <consortium name="The MGC Project Team"/>
        </authorList>
    </citation>
    <scope>NUCLEOTIDE SEQUENCE [LARGE SCALE MRNA] OF 51-715</scope>
</reference>
<reference key="3">
    <citation type="journal article" date="2007" name="J. Proteome Res.">
        <title>A differential phosphoproteomic analysis of retinoic acid-treated P19 cells.</title>
        <authorList>
            <person name="Smith J.C."/>
            <person name="Duchesne M.A."/>
            <person name="Tozzi P."/>
            <person name="Ethier M."/>
            <person name="Figeys D."/>
        </authorList>
    </citation>
    <scope>IDENTIFICATION BY MASS SPECTROMETRY [LARGE SCALE ANALYSIS]</scope>
    <source>
        <tissue>Teratocarcinoma</tissue>
    </source>
</reference>
<reference key="4">
    <citation type="journal article" date="2009" name="Cell Stem Cell">
        <title>A genome-scale RNAi screen for Oct4 modulators defines a role of the Paf1 complex for embryonic stem cell identity.</title>
        <authorList>
            <person name="Ding L."/>
            <person name="Paszkowski-Rogacz M."/>
            <person name="Nitzsche A."/>
            <person name="Slabicki M.M."/>
            <person name="Heninger A.K."/>
            <person name="de Vries I."/>
            <person name="Kittler R."/>
            <person name="Junqueira M."/>
            <person name="Shevchenko A."/>
            <person name="Schulz H."/>
            <person name="Hubner N."/>
            <person name="Doss M.X."/>
            <person name="Sachinidis A."/>
            <person name="Hescheler J."/>
            <person name="Iacone R."/>
            <person name="Anastassiadis K."/>
            <person name="Stewart A.F."/>
            <person name="Pisabarro M.T."/>
            <person name="Caldarelli A."/>
            <person name="Poser I."/>
            <person name="Theis M."/>
            <person name="Buchholz F."/>
        </authorList>
    </citation>
    <scope>FUNCTION</scope>
</reference>
<reference key="5">
    <citation type="journal article" date="2010" name="Cell">
        <title>A tissue-specific atlas of mouse protein phosphorylation and expression.</title>
        <authorList>
            <person name="Huttlin E.L."/>
            <person name="Jedrychowski M.P."/>
            <person name="Elias J.E."/>
            <person name="Goswami T."/>
            <person name="Rad R."/>
            <person name="Beausoleil S.A."/>
            <person name="Villen J."/>
            <person name="Haas W."/>
            <person name="Sowa M.E."/>
            <person name="Gygi S.P."/>
        </authorList>
    </citation>
    <scope>IDENTIFICATION BY MASS SPECTROMETRY [LARGE SCALE ANALYSIS]</scope>
    <source>
        <tissue>Spleen</tissue>
        <tissue>Testis</tissue>
    </source>
</reference>
<reference key="6">
    <citation type="journal article" date="2016" name="Nat. Cell Biol.">
        <title>Regulation of transcriptional elongation in pluripotency and cell differentiation by the PHD-finger protein Phf5a.</title>
        <authorList>
            <person name="Strikoudis A."/>
            <person name="Lazaris C."/>
            <person name="Trimarchi T."/>
            <person name="Galvao Neto A.L."/>
            <person name="Yang Y."/>
            <person name="Ntziachristos P."/>
            <person name="Rothbart S."/>
            <person name="Buckley S."/>
            <person name="Dolgalev I."/>
            <person name="Stadtfeld M."/>
            <person name="Strahl B.D."/>
            <person name="Dynlacht B.D."/>
            <person name="Tsirigos A."/>
            <person name="Aifantis I."/>
        </authorList>
    </citation>
    <scope>IDENTIFICATION BY MASS SPECTROMETRY</scope>
    <scope>SUBUNIT</scope>
</reference>